<comment type="similarity">
    <text evidence="1">Belongs to the bacterial ribosomal protein bL34 family.</text>
</comment>
<organism>
    <name type="scientific">Methylocella silvestris (strain DSM 15510 / CIP 108128 / LMG 27833 / NCIMB 13906 / BL2)</name>
    <dbReference type="NCBI Taxonomy" id="395965"/>
    <lineage>
        <taxon>Bacteria</taxon>
        <taxon>Pseudomonadati</taxon>
        <taxon>Pseudomonadota</taxon>
        <taxon>Alphaproteobacteria</taxon>
        <taxon>Hyphomicrobiales</taxon>
        <taxon>Beijerinckiaceae</taxon>
        <taxon>Methylocella</taxon>
    </lineage>
</organism>
<keyword id="KW-1185">Reference proteome</keyword>
<keyword id="KW-0687">Ribonucleoprotein</keyword>
<keyword id="KW-0689">Ribosomal protein</keyword>
<sequence>MKRTYQPSKLVRKRRHGFRARMATVGGRRIIAARRARGRKKLSA</sequence>
<reference key="1">
    <citation type="journal article" date="2010" name="J. Bacteriol.">
        <title>Complete genome sequence of the aerobic facultative methanotroph Methylocella silvestris BL2.</title>
        <authorList>
            <person name="Chen Y."/>
            <person name="Crombie A."/>
            <person name="Rahman M.T."/>
            <person name="Dedysh S.N."/>
            <person name="Liesack W."/>
            <person name="Stott M.B."/>
            <person name="Alam M."/>
            <person name="Theisen A.R."/>
            <person name="Murrell J.C."/>
            <person name="Dunfield P.F."/>
        </authorList>
    </citation>
    <scope>NUCLEOTIDE SEQUENCE [LARGE SCALE GENOMIC DNA]</scope>
    <source>
        <strain>DSM 15510 / CIP 108128 / LMG 27833 / NCIMB 13906 / BL2</strain>
    </source>
</reference>
<name>RL34_METSB</name>
<protein>
    <recommendedName>
        <fullName evidence="1">Large ribosomal subunit protein bL34</fullName>
    </recommendedName>
    <alternativeName>
        <fullName evidence="2">50S ribosomal protein L34</fullName>
    </alternativeName>
</protein>
<evidence type="ECO:0000255" key="1">
    <source>
        <dbReference type="HAMAP-Rule" id="MF_00391"/>
    </source>
</evidence>
<evidence type="ECO:0000305" key="2"/>
<feature type="chain" id="PRO_1000134450" description="Large ribosomal subunit protein bL34">
    <location>
        <begin position="1"/>
        <end position="44"/>
    </location>
</feature>
<proteinExistence type="inferred from homology"/>
<gene>
    <name evidence="1" type="primary">rpmH</name>
    <name type="ordered locus">Msil_1199</name>
</gene>
<dbReference type="EMBL" id="CP001280">
    <property type="protein sequence ID" value="ACK50168.1"/>
    <property type="molecule type" value="Genomic_DNA"/>
</dbReference>
<dbReference type="SMR" id="B8EPG3"/>
<dbReference type="STRING" id="395965.Msil_1199"/>
<dbReference type="KEGG" id="msl:Msil_1199"/>
<dbReference type="eggNOG" id="COG0230">
    <property type="taxonomic scope" value="Bacteria"/>
</dbReference>
<dbReference type="HOGENOM" id="CLU_129938_2_0_5"/>
<dbReference type="Proteomes" id="UP000002257">
    <property type="component" value="Chromosome"/>
</dbReference>
<dbReference type="GO" id="GO:1990904">
    <property type="term" value="C:ribonucleoprotein complex"/>
    <property type="evidence" value="ECO:0007669"/>
    <property type="project" value="UniProtKB-KW"/>
</dbReference>
<dbReference type="GO" id="GO:0005840">
    <property type="term" value="C:ribosome"/>
    <property type="evidence" value="ECO:0007669"/>
    <property type="project" value="UniProtKB-KW"/>
</dbReference>
<dbReference type="GO" id="GO:0003735">
    <property type="term" value="F:structural constituent of ribosome"/>
    <property type="evidence" value="ECO:0007669"/>
    <property type="project" value="InterPro"/>
</dbReference>
<dbReference type="GO" id="GO:0006412">
    <property type="term" value="P:translation"/>
    <property type="evidence" value="ECO:0007669"/>
    <property type="project" value="UniProtKB-UniRule"/>
</dbReference>
<dbReference type="FunFam" id="1.10.287.3980:FF:000001">
    <property type="entry name" value="Mitochondrial ribosomal protein L34"/>
    <property type="match status" value="1"/>
</dbReference>
<dbReference type="Gene3D" id="1.10.287.3980">
    <property type="match status" value="1"/>
</dbReference>
<dbReference type="HAMAP" id="MF_00391">
    <property type="entry name" value="Ribosomal_bL34"/>
    <property type="match status" value="1"/>
</dbReference>
<dbReference type="InterPro" id="IPR000271">
    <property type="entry name" value="Ribosomal_bL34"/>
</dbReference>
<dbReference type="InterPro" id="IPR020939">
    <property type="entry name" value="Ribosomal_bL34_CS"/>
</dbReference>
<dbReference type="NCBIfam" id="TIGR01030">
    <property type="entry name" value="rpmH_bact"/>
    <property type="match status" value="1"/>
</dbReference>
<dbReference type="PANTHER" id="PTHR14503:SF4">
    <property type="entry name" value="LARGE RIBOSOMAL SUBUNIT PROTEIN BL34M"/>
    <property type="match status" value="1"/>
</dbReference>
<dbReference type="PANTHER" id="PTHR14503">
    <property type="entry name" value="MITOCHONDRIAL RIBOSOMAL PROTEIN 34 FAMILY MEMBER"/>
    <property type="match status" value="1"/>
</dbReference>
<dbReference type="Pfam" id="PF00468">
    <property type="entry name" value="Ribosomal_L34"/>
    <property type="match status" value="1"/>
</dbReference>
<dbReference type="PROSITE" id="PS00784">
    <property type="entry name" value="RIBOSOMAL_L34"/>
    <property type="match status" value="1"/>
</dbReference>
<accession>B8EPG3</accession>